<feature type="chain" id="PRO_0000079637" description="66 kDa cell wall protein">
    <location>
        <begin position="1"/>
        <end position="13" status="greater than"/>
    </location>
</feature>
<feature type="non-terminal residue" evidence="2">
    <location>
        <position position="13"/>
    </location>
</feature>
<comment type="subcellular location">
    <subcellularLocation>
        <location evidence="1">Secreted</location>
        <location evidence="1">Cell wall</location>
    </subcellularLocation>
</comment>
<name>CWP05_TOBAC</name>
<protein>
    <recommendedName>
        <fullName>66 kDa cell wall protein</fullName>
    </recommendedName>
</protein>
<reference evidence="3" key="1">
    <citation type="journal article" date="1997" name="J. Biol. Chem.">
        <title>Differential extraction and protein sequencing reveals major differences in patterns of primary cell wall proteins from plants.</title>
        <authorList>
            <person name="Robertson D."/>
            <person name="Mitchell G.P."/>
            <person name="Gilroy J.S."/>
            <person name="Gerrish C."/>
            <person name="Bolwell G.P."/>
            <person name="Slabas A.R."/>
        </authorList>
    </citation>
    <scope>PROTEIN SEQUENCE</scope>
    <scope>SUBCELLULAR LOCATION</scope>
</reference>
<proteinExistence type="evidence at protein level"/>
<organism>
    <name type="scientific">Nicotiana tabacum</name>
    <name type="common">Common tobacco</name>
    <dbReference type="NCBI Taxonomy" id="4097"/>
    <lineage>
        <taxon>Eukaryota</taxon>
        <taxon>Viridiplantae</taxon>
        <taxon>Streptophyta</taxon>
        <taxon>Embryophyta</taxon>
        <taxon>Tracheophyta</taxon>
        <taxon>Spermatophyta</taxon>
        <taxon>Magnoliopsida</taxon>
        <taxon>eudicotyledons</taxon>
        <taxon>Gunneridae</taxon>
        <taxon>Pentapetalae</taxon>
        <taxon>asterids</taxon>
        <taxon>lamiids</taxon>
        <taxon>Solanales</taxon>
        <taxon>Solanaceae</taxon>
        <taxon>Nicotianoideae</taxon>
        <taxon>Nicotianeae</taxon>
        <taxon>Nicotiana</taxon>
    </lineage>
</organism>
<evidence type="ECO:0000269" key="1">
    <source>
    </source>
</evidence>
<evidence type="ECO:0000303" key="2">
    <source>
    </source>
</evidence>
<evidence type="ECO:0000305" key="3"/>
<dbReference type="PaxDb" id="4097-P80782"/>
<dbReference type="Proteomes" id="UP000084051">
    <property type="component" value="Unplaced"/>
</dbReference>
<dbReference type="GO" id="GO:0005576">
    <property type="term" value="C:extracellular region"/>
    <property type="evidence" value="ECO:0007669"/>
    <property type="project" value="UniProtKB-KW"/>
</dbReference>
<sequence>VPPAVWNSXNYNS</sequence>
<keyword id="KW-0134">Cell wall</keyword>
<keyword id="KW-0903">Direct protein sequencing</keyword>
<keyword id="KW-1185">Reference proteome</keyword>
<keyword id="KW-0964">Secreted</keyword>
<accession>P80782</accession>